<keyword id="KW-0067">ATP-binding</keyword>
<keyword id="KW-0418">Kinase</keyword>
<keyword id="KW-0545">Nucleotide biosynthesis</keyword>
<keyword id="KW-0547">Nucleotide-binding</keyword>
<keyword id="KW-1185">Reference proteome</keyword>
<keyword id="KW-0808">Transferase</keyword>
<organism>
    <name type="scientific">Ruegeria pomeroyi (strain ATCC 700808 / DSM 15171 / DSS-3)</name>
    <name type="common">Silicibacter pomeroyi</name>
    <dbReference type="NCBI Taxonomy" id="246200"/>
    <lineage>
        <taxon>Bacteria</taxon>
        <taxon>Pseudomonadati</taxon>
        <taxon>Pseudomonadota</taxon>
        <taxon>Alphaproteobacteria</taxon>
        <taxon>Rhodobacterales</taxon>
        <taxon>Roseobacteraceae</taxon>
        <taxon>Ruegeria</taxon>
    </lineage>
</organism>
<comment type="function">
    <text evidence="1">Phosphorylation of dTMP to form dTDP in both de novo and salvage pathways of dTTP synthesis.</text>
</comment>
<comment type="catalytic activity">
    <reaction evidence="1">
        <text>dTMP + ATP = dTDP + ADP</text>
        <dbReference type="Rhea" id="RHEA:13517"/>
        <dbReference type="ChEBI" id="CHEBI:30616"/>
        <dbReference type="ChEBI" id="CHEBI:58369"/>
        <dbReference type="ChEBI" id="CHEBI:63528"/>
        <dbReference type="ChEBI" id="CHEBI:456216"/>
        <dbReference type="EC" id="2.7.4.9"/>
    </reaction>
</comment>
<comment type="similarity">
    <text evidence="1">Belongs to the thymidylate kinase family.</text>
</comment>
<accession>Q5LPV9</accession>
<protein>
    <recommendedName>
        <fullName evidence="1">Thymidylate kinase</fullName>
        <ecNumber evidence="1">2.7.4.9</ecNumber>
    </recommendedName>
    <alternativeName>
        <fullName evidence="1">dTMP kinase</fullName>
    </alternativeName>
</protein>
<proteinExistence type="inferred from homology"/>
<sequence length="211" mass="23532">MSGTGLFLTFEGIDGSGKSTQARLLAETLRAAGHDVVLTREPGGSPGAEEIRRLVLEGDPDRWSAETEILLFTAARRDHLERTIEPALAAGRVVICDRFADSTRMYQGLSRGDLRQLVDQLHALMIGREPDLTLLVDMDPETGLSRAKGRQGSEERFEDFGPELQQRMRAGFLDLAREYAHRFRIIDGNRDMDSVAADVTEIVLTHLNRTR</sequence>
<evidence type="ECO:0000255" key="1">
    <source>
        <dbReference type="HAMAP-Rule" id="MF_00165"/>
    </source>
</evidence>
<dbReference type="EC" id="2.7.4.9" evidence="1"/>
<dbReference type="EMBL" id="CP000031">
    <property type="protein sequence ID" value="AAV95981.1"/>
    <property type="molecule type" value="Genomic_DNA"/>
</dbReference>
<dbReference type="RefSeq" id="WP_011048439.1">
    <property type="nucleotide sequence ID" value="NC_003911.12"/>
</dbReference>
<dbReference type="SMR" id="Q5LPV9"/>
<dbReference type="STRING" id="246200.SPO2740"/>
<dbReference type="PaxDb" id="246200-SPO2740"/>
<dbReference type="KEGG" id="sil:SPO2740"/>
<dbReference type="eggNOG" id="COG0125">
    <property type="taxonomic scope" value="Bacteria"/>
</dbReference>
<dbReference type="HOGENOM" id="CLU_049131_0_0_5"/>
<dbReference type="OrthoDB" id="9774907at2"/>
<dbReference type="Proteomes" id="UP000001023">
    <property type="component" value="Chromosome"/>
</dbReference>
<dbReference type="GO" id="GO:0005829">
    <property type="term" value="C:cytosol"/>
    <property type="evidence" value="ECO:0007669"/>
    <property type="project" value="TreeGrafter"/>
</dbReference>
<dbReference type="GO" id="GO:0005524">
    <property type="term" value="F:ATP binding"/>
    <property type="evidence" value="ECO:0007669"/>
    <property type="project" value="UniProtKB-UniRule"/>
</dbReference>
<dbReference type="GO" id="GO:0004798">
    <property type="term" value="F:dTMP kinase activity"/>
    <property type="evidence" value="ECO:0007669"/>
    <property type="project" value="UniProtKB-UniRule"/>
</dbReference>
<dbReference type="GO" id="GO:0006233">
    <property type="term" value="P:dTDP biosynthetic process"/>
    <property type="evidence" value="ECO:0007669"/>
    <property type="project" value="InterPro"/>
</dbReference>
<dbReference type="GO" id="GO:0006235">
    <property type="term" value="P:dTTP biosynthetic process"/>
    <property type="evidence" value="ECO:0007669"/>
    <property type="project" value="UniProtKB-UniRule"/>
</dbReference>
<dbReference type="GO" id="GO:0006227">
    <property type="term" value="P:dUDP biosynthetic process"/>
    <property type="evidence" value="ECO:0007669"/>
    <property type="project" value="TreeGrafter"/>
</dbReference>
<dbReference type="CDD" id="cd01672">
    <property type="entry name" value="TMPK"/>
    <property type="match status" value="1"/>
</dbReference>
<dbReference type="FunFam" id="3.40.50.300:FF:000225">
    <property type="entry name" value="Thymidylate kinase"/>
    <property type="match status" value="1"/>
</dbReference>
<dbReference type="Gene3D" id="3.40.50.300">
    <property type="entry name" value="P-loop containing nucleotide triphosphate hydrolases"/>
    <property type="match status" value="1"/>
</dbReference>
<dbReference type="HAMAP" id="MF_00165">
    <property type="entry name" value="Thymidylate_kinase"/>
    <property type="match status" value="1"/>
</dbReference>
<dbReference type="InterPro" id="IPR027417">
    <property type="entry name" value="P-loop_NTPase"/>
</dbReference>
<dbReference type="InterPro" id="IPR039430">
    <property type="entry name" value="Thymidylate_kin-like_dom"/>
</dbReference>
<dbReference type="InterPro" id="IPR018094">
    <property type="entry name" value="Thymidylate_kinase"/>
</dbReference>
<dbReference type="NCBIfam" id="TIGR00041">
    <property type="entry name" value="DTMP_kinase"/>
    <property type="match status" value="1"/>
</dbReference>
<dbReference type="PANTHER" id="PTHR10344">
    <property type="entry name" value="THYMIDYLATE KINASE"/>
    <property type="match status" value="1"/>
</dbReference>
<dbReference type="PANTHER" id="PTHR10344:SF4">
    <property type="entry name" value="UMP-CMP KINASE 2, MITOCHONDRIAL"/>
    <property type="match status" value="1"/>
</dbReference>
<dbReference type="Pfam" id="PF02223">
    <property type="entry name" value="Thymidylate_kin"/>
    <property type="match status" value="1"/>
</dbReference>
<dbReference type="SUPFAM" id="SSF52540">
    <property type="entry name" value="P-loop containing nucleoside triphosphate hydrolases"/>
    <property type="match status" value="1"/>
</dbReference>
<name>KTHY_RUEPO</name>
<reference key="1">
    <citation type="journal article" date="2004" name="Nature">
        <title>Genome sequence of Silicibacter pomeroyi reveals adaptations to the marine environment.</title>
        <authorList>
            <person name="Moran M.A."/>
            <person name="Buchan A."/>
            <person name="Gonzalez J.M."/>
            <person name="Heidelberg J.F."/>
            <person name="Whitman W.B."/>
            <person name="Kiene R.P."/>
            <person name="Henriksen J.R."/>
            <person name="King G.M."/>
            <person name="Belas R."/>
            <person name="Fuqua C."/>
            <person name="Brinkac L.M."/>
            <person name="Lewis M."/>
            <person name="Johri S."/>
            <person name="Weaver B."/>
            <person name="Pai G."/>
            <person name="Eisen J.A."/>
            <person name="Rahe E."/>
            <person name="Sheldon W.M."/>
            <person name="Ye W."/>
            <person name="Miller T.R."/>
            <person name="Carlton J."/>
            <person name="Rasko D.A."/>
            <person name="Paulsen I.T."/>
            <person name="Ren Q."/>
            <person name="Daugherty S.C."/>
            <person name="DeBoy R.T."/>
            <person name="Dodson R.J."/>
            <person name="Durkin A.S."/>
            <person name="Madupu R."/>
            <person name="Nelson W.C."/>
            <person name="Sullivan S.A."/>
            <person name="Rosovitz M.J."/>
            <person name="Haft D.H."/>
            <person name="Selengut J."/>
            <person name="Ward N."/>
        </authorList>
    </citation>
    <scope>NUCLEOTIDE SEQUENCE [LARGE SCALE GENOMIC DNA]</scope>
    <source>
        <strain>ATCC 700808 / DSM 15171 / DSS-3</strain>
    </source>
</reference>
<reference key="2">
    <citation type="journal article" date="2014" name="Stand. Genomic Sci.">
        <title>An updated genome annotation for the model marine bacterium Ruegeria pomeroyi DSS-3.</title>
        <authorList>
            <person name="Rivers A.R."/>
            <person name="Smith C.B."/>
            <person name="Moran M.A."/>
        </authorList>
    </citation>
    <scope>GENOME REANNOTATION</scope>
    <source>
        <strain>ATCC 700808 / DSM 15171 / DSS-3</strain>
    </source>
</reference>
<feature type="chain" id="PRO_1000123588" description="Thymidylate kinase">
    <location>
        <begin position="1"/>
        <end position="211"/>
    </location>
</feature>
<feature type="binding site" evidence="1">
    <location>
        <begin position="12"/>
        <end position="19"/>
    </location>
    <ligand>
        <name>ATP</name>
        <dbReference type="ChEBI" id="CHEBI:30616"/>
    </ligand>
</feature>
<gene>
    <name evidence="1" type="primary">tmk</name>
    <name type="ordered locus">SPO2740</name>
</gene>